<protein>
    <recommendedName>
        <fullName>Protein LZIC</fullName>
    </recommendedName>
    <alternativeName>
        <fullName>Leucine zipper and CTNNBIP1 domain-containing protein</fullName>
    </alternativeName>
    <alternativeName>
        <fullName>Leucine zipper and ICAT homologous domain-containing protein</fullName>
    </alternativeName>
</protein>
<comment type="subunit">
    <text evidence="1">Does not interact with CTNNB1.</text>
</comment>
<comment type="similarity">
    <text evidence="3">Belongs to the CTNNBIP1 family.</text>
</comment>
<organism>
    <name type="scientific">Rattus norvegicus</name>
    <name type="common">Rat</name>
    <dbReference type="NCBI Taxonomy" id="10116"/>
    <lineage>
        <taxon>Eukaryota</taxon>
        <taxon>Metazoa</taxon>
        <taxon>Chordata</taxon>
        <taxon>Craniata</taxon>
        <taxon>Vertebrata</taxon>
        <taxon>Euteleostomi</taxon>
        <taxon>Mammalia</taxon>
        <taxon>Eutheria</taxon>
        <taxon>Euarchontoglires</taxon>
        <taxon>Glires</taxon>
        <taxon>Rodentia</taxon>
        <taxon>Myomorpha</taxon>
        <taxon>Muroidea</taxon>
        <taxon>Muridae</taxon>
        <taxon>Murinae</taxon>
        <taxon>Rattus</taxon>
    </lineage>
</organism>
<reference key="1">
    <citation type="journal article" date="2004" name="Genome Res.">
        <title>The status, quality, and expansion of the NIH full-length cDNA project: the Mammalian Gene Collection (MGC).</title>
        <authorList>
            <consortium name="The MGC Project Team"/>
        </authorList>
    </citation>
    <scope>NUCLEOTIDE SEQUENCE [LARGE SCALE MRNA]</scope>
    <source>
        <tissue>Heart</tissue>
    </source>
</reference>
<keyword id="KW-0175">Coiled coil</keyword>
<keyword id="KW-1185">Reference proteome</keyword>
<evidence type="ECO:0000250" key="1"/>
<evidence type="ECO:0000255" key="2"/>
<evidence type="ECO:0000305" key="3"/>
<dbReference type="EMBL" id="BC087098">
    <property type="protein sequence ID" value="AAH87098.1"/>
    <property type="molecule type" value="mRNA"/>
</dbReference>
<dbReference type="RefSeq" id="NP_001013259.1">
    <property type="nucleotide sequence ID" value="NM_001013241.2"/>
</dbReference>
<dbReference type="RefSeq" id="XP_006239496.1">
    <property type="nucleotide sequence ID" value="XM_006239434.4"/>
</dbReference>
<dbReference type="RefSeq" id="XP_006239497.1">
    <property type="nucleotide sequence ID" value="XM_006239435.2"/>
</dbReference>
<dbReference type="SMR" id="Q5PQN7"/>
<dbReference type="FunCoup" id="Q5PQN7">
    <property type="interactions" value="3030"/>
</dbReference>
<dbReference type="STRING" id="10116.ENSRNOP00000021823"/>
<dbReference type="iPTMnet" id="Q5PQN7"/>
<dbReference type="PhosphoSitePlus" id="Q5PQN7"/>
<dbReference type="jPOST" id="Q5PQN7"/>
<dbReference type="PaxDb" id="10116-ENSRNOP00000021823"/>
<dbReference type="GeneID" id="366507"/>
<dbReference type="KEGG" id="rno:366507"/>
<dbReference type="UCSC" id="RGD:1309253">
    <property type="organism name" value="rat"/>
</dbReference>
<dbReference type="AGR" id="RGD:1309253"/>
<dbReference type="CTD" id="84328"/>
<dbReference type="RGD" id="1309253">
    <property type="gene designation" value="Lzic"/>
</dbReference>
<dbReference type="VEuPathDB" id="HostDB:ENSRNOG00000016200"/>
<dbReference type="eggNOG" id="ENOG502QPUB">
    <property type="taxonomic scope" value="Eukaryota"/>
</dbReference>
<dbReference type="HOGENOM" id="CLU_091171_0_0_1"/>
<dbReference type="InParanoid" id="Q5PQN7"/>
<dbReference type="OrthoDB" id="90366at9989"/>
<dbReference type="PhylomeDB" id="Q5PQN7"/>
<dbReference type="TreeFam" id="TF314533"/>
<dbReference type="PRO" id="PR:Q5PQN7"/>
<dbReference type="Proteomes" id="UP000002494">
    <property type="component" value="Chromosome 5"/>
</dbReference>
<dbReference type="Bgee" id="ENSRNOG00000016200">
    <property type="expression patterns" value="Expressed in skeletal muscle tissue and 19 other cell types or tissues"/>
</dbReference>
<dbReference type="GO" id="GO:0008013">
    <property type="term" value="F:beta-catenin binding"/>
    <property type="evidence" value="ECO:0007669"/>
    <property type="project" value="InterPro"/>
</dbReference>
<dbReference type="GO" id="GO:0010212">
    <property type="term" value="P:response to ionizing radiation"/>
    <property type="evidence" value="ECO:0000270"/>
    <property type="project" value="RGD"/>
</dbReference>
<dbReference type="FunFam" id="1.10.10.490:FF:000002">
    <property type="entry name" value="protein LZIC isoform X1"/>
    <property type="match status" value="1"/>
</dbReference>
<dbReference type="Gene3D" id="1.10.10.490">
    <property type="entry name" value="Beta-catenin-interacting ICAT"/>
    <property type="match status" value="1"/>
</dbReference>
<dbReference type="InterPro" id="IPR009428">
    <property type="entry name" value="ICAT_dom"/>
</dbReference>
<dbReference type="InterPro" id="IPR036911">
    <property type="entry name" value="ICAT_sf"/>
</dbReference>
<dbReference type="PANTHER" id="PTHR47142">
    <property type="entry name" value="BETA-CATENIN-INTERACTING PROTEIN 1"/>
    <property type="match status" value="1"/>
</dbReference>
<dbReference type="PANTHER" id="PTHR47142:SF1">
    <property type="entry name" value="BETA-CATENIN-INTERACTING PROTEIN 1"/>
    <property type="match status" value="1"/>
</dbReference>
<dbReference type="Pfam" id="PF06384">
    <property type="entry name" value="ICAT"/>
    <property type="match status" value="1"/>
</dbReference>
<dbReference type="SUPFAM" id="SSF81730">
    <property type="entry name" value="beta-catenin-interacting protein ICAT"/>
    <property type="match status" value="1"/>
</dbReference>
<name>LZIC_RAT</name>
<accession>Q5PQN7</accession>
<feature type="chain" id="PRO_0000263693" description="Protein LZIC">
    <location>
        <begin position="1"/>
        <end position="190"/>
    </location>
</feature>
<feature type="coiled-coil region" evidence="2">
    <location>
        <begin position="2"/>
        <end position="63"/>
    </location>
</feature>
<sequence length="190" mass="21394">MASRGKTETSKLKQNLEEQLDRLMQQLQDLEECREELDGDEYEETKKETLEQLSEFNDSLKKIMSGNMTLVDELSGMQLAIQAAISQAFKTPEVIRLFAKKQPGQLRTRLAEMDRDLMVGKLERDLHTQQKVEILTALRKLGEKLTDDDEAFLSANAGAVLSQFEKVSTELGSGDKVLALAGFEVEKAKK</sequence>
<proteinExistence type="evidence at transcript level"/>
<gene>
    <name type="primary">Lzic</name>
</gene>